<proteinExistence type="evidence at protein level"/>
<dbReference type="EMBL" id="U41515">
    <property type="protein sequence ID" value="AAA91179.1"/>
    <property type="molecule type" value="mRNA"/>
</dbReference>
<dbReference type="EMBL" id="AC073230">
    <property type="protein sequence ID" value="AAQ93368.1"/>
    <property type="molecule type" value="Genomic_DNA"/>
</dbReference>
<dbReference type="EMBL" id="BC032782">
    <property type="protein sequence ID" value="AAH32782.1"/>
    <property type="molecule type" value="mRNA"/>
</dbReference>
<dbReference type="CCDS" id="CCDS5646.1">
    <molecule id="P60896-1"/>
</dbReference>
<dbReference type="PIR" id="G02284">
    <property type="entry name" value="G02284"/>
</dbReference>
<dbReference type="RefSeq" id="NP_006295.1">
    <molecule id="P60896-1"/>
    <property type="nucleotide sequence ID" value="NM_006304.2"/>
</dbReference>
<dbReference type="PDB" id="1IYJ">
    <property type="method" value="X-ray"/>
    <property type="resolution" value="3.40 A"/>
    <property type="chains" value="A/C=1-70"/>
</dbReference>
<dbReference type="PDB" id="1MIU">
    <property type="method" value="X-ray"/>
    <property type="resolution" value="3.10 A"/>
    <property type="chains" value="B=1-70"/>
</dbReference>
<dbReference type="PDB" id="1MJE">
    <property type="method" value="X-ray"/>
    <property type="resolution" value="3.50 A"/>
    <property type="chains" value="B=1-70"/>
</dbReference>
<dbReference type="PDB" id="3T5X">
    <property type="method" value="X-ray"/>
    <property type="resolution" value="2.12 A"/>
    <property type="chains" value="B=1-70"/>
</dbReference>
<dbReference type="PDB" id="5GJQ">
    <property type="method" value="EM"/>
    <property type="resolution" value="4.50 A"/>
    <property type="chains" value="Y=1-70"/>
</dbReference>
<dbReference type="PDB" id="5GJR">
    <property type="method" value="EM"/>
    <property type="resolution" value="3.50 A"/>
    <property type="chains" value="AB/Y=1-70"/>
</dbReference>
<dbReference type="PDB" id="5L4K">
    <property type="method" value="EM"/>
    <property type="resolution" value="4.50 A"/>
    <property type="chains" value="Y=1-70"/>
</dbReference>
<dbReference type="PDB" id="5LN3">
    <property type="method" value="EM"/>
    <property type="resolution" value="6.80 A"/>
    <property type="chains" value="Y=1-70"/>
</dbReference>
<dbReference type="PDB" id="5M32">
    <property type="method" value="EM"/>
    <property type="resolution" value="3.80 A"/>
    <property type="chains" value="s=1-70"/>
</dbReference>
<dbReference type="PDB" id="5T0C">
    <property type="method" value="EM"/>
    <property type="resolution" value="3.80 A"/>
    <property type="chains" value="Ae/Be=1-70"/>
</dbReference>
<dbReference type="PDB" id="5T0G">
    <property type="method" value="EM"/>
    <property type="resolution" value="4.40 A"/>
    <property type="chains" value="e=1-70"/>
</dbReference>
<dbReference type="PDB" id="5T0H">
    <property type="method" value="EM"/>
    <property type="resolution" value="6.80 A"/>
    <property type="chains" value="e=1-70"/>
</dbReference>
<dbReference type="PDB" id="5T0I">
    <property type="method" value="EM"/>
    <property type="resolution" value="8.00 A"/>
    <property type="chains" value="e=1-70"/>
</dbReference>
<dbReference type="PDB" id="5T0J">
    <property type="method" value="EM"/>
    <property type="resolution" value="8.00 A"/>
    <property type="chains" value="e=1-70"/>
</dbReference>
<dbReference type="PDB" id="5VFR">
    <property type="method" value="EM"/>
    <property type="resolution" value="4.90 A"/>
    <property type="chains" value="e=1-70"/>
</dbReference>
<dbReference type="PDB" id="5VFT">
    <property type="method" value="EM"/>
    <property type="resolution" value="7.00 A"/>
    <property type="chains" value="e=1-70"/>
</dbReference>
<dbReference type="PDB" id="5VGZ">
    <property type="method" value="EM"/>
    <property type="resolution" value="3.70 A"/>
    <property type="chains" value="e=1-70"/>
</dbReference>
<dbReference type="PDB" id="5VHF">
    <property type="method" value="EM"/>
    <property type="resolution" value="5.70 A"/>
    <property type="chains" value="e=1-70"/>
</dbReference>
<dbReference type="PDB" id="5VHH">
    <property type="method" value="EM"/>
    <property type="resolution" value="6.10 A"/>
    <property type="chains" value="e=1-70"/>
</dbReference>
<dbReference type="PDB" id="5VHI">
    <property type="method" value="EM"/>
    <property type="resolution" value="6.80 A"/>
    <property type="chains" value="e=1-70"/>
</dbReference>
<dbReference type="PDB" id="5VHS">
    <property type="method" value="EM"/>
    <property type="resolution" value="8.80 A"/>
    <property type="chains" value="e=38-70"/>
</dbReference>
<dbReference type="PDB" id="6MSB">
    <property type="method" value="EM"/>
    <property type="resolution" value="3.00 A"/>
    <property type="chains" value="e=1-70"/>
</dbReference>
<dbReference type="PDB" id="6MSD">
    <property type="method" value="EM"/>
    <property type="resolution" value="3.20 A"/>
    <property type="chains" value="e=1-70"/>
</dbReference>
<dbReference type="PDB" id="6MSG">
    <property type="method" value="EM"/>
    <property type="resolution" value="3.50 A"/>
    <property type="chains" value="e=1-70"/>
</dbReference>
<dbReference type="PDB" id="6MSH">
    <property type="method" value="EM"/>
    <property type="resolution" value="3.60 A"/>
    <property type="chains" value="e=1-70"/>
</dbReference>
<dbReference type="PDB" id="6MSJ">
    <property type="method" value="EM"/>
    <property type="resolution" value="3.30 A"/>
    <property type="chains" value="e=1-70"/>
</dbReference>
<dbReference type="PDB" id="6MSK">
    <property type="method" value="EM"/>
    <property type="resolution" value="3.20 A"/>
    <property type="chains" value="e=1-70"/>
</dbReference>
<dbReference type="PDB" id="6WJD">
    <property type="method" value="EM"/>
    <property type="resolution" value="4.80 A"/>
    <property type="chains" value="e=1-70"/>
</dbReference>
<dbReference type="PDB" id="6WJN">
    <property type="method" value="EM"/>
    <property type="resolution" value="5.70 A"/>
    <property type="chains" value="e=1-70"/>
</dbReference>
<dbReference type="PDB" id="7QXN">
    <property type="method" value="EM"/>
    <property type="resolution" value="3.70 A"/>
    <property type="chains" value="e=1-70"/>
</dbReference>
<dbReference type="PDB" id="7QXP">
    <property type="method" value="EM"/>
    <property type="resolution" value="3.60 A"/>
    <property type="chains" value="e=1-70"/>
</dbReference>
<dbReference type="PDB" id="7QXU">
    <property type="method" value="EM"/>
    <property type="resolution" value="4.30 A"/>
    <property type="chains" value="e=1-70"/>
</dbReference>
<dbReference type="PDB" id="7QXW">
    <property type="method" value="EM"/>
    <property type="resolution" value="4.10 A"/>
    <property type="chains" value="e=1-70"/>
</dbReference>
<dbReference type="PDB" id="7QXX">
    <property type="method" value="EM"/>
    <property type="resolution" value="4.40 A"/>
    <property type="chains" value="e=1-70"/>
</dbReference>
<dbReference type="PDB" id="7QY7">
    <property type="method" value="EM"/>
    <property type="resolution" value="4.70 A"/>
    <property type="chains" value="e=1-70"/>
</dbReference>
<dbReference type="PDB" id="7QYA">
    <property type="method" value="EM"/>
    <property type="resolution" value="4.80 A"/>
    <property type="chains" value="e=1-70"/>
</dbReference>
<dbReference type="PDB" id="7QYB">
    <property type="method" value="EM"/>
    <property type="resolution" value="4.10 A"/>
    <property type="chains" value="e=1-70"/>
</dbReference>
<dbReference type="PDB" id="7W37">
    <property type="method" value="EM"/>
    <property type="resolution" value="3.00 A"/>
    <property type="chains" value="e=1-70"/>
</dbReference>
<dbReference type="PDB" id="7W38">
    <property type="method" value="EM"/>
    <property type="resolution" value="3.10 A"/>
    <property type="chains" value="e=1-70"/>
</dbReference>
<dbReference type="PDB" id="7W39">
    <property type="method" value="EM"/>
    <property type="resolution" value="3.20 A"/>
    <property type="chains" value="e=1-70"/>
</dbReference>
<dbReference type="PDB" id="7W3A">
    <property type="method" value="EM"/>
    <property type="resolution" value="3.50 A"/>
    <property type="chains" value="e=1-70"/>
</dbReference>
<dbReference type="PDB" id="7W3B">
    <property type="method" value="EM"/>
    <property type="resolution" value="3.60 A"/>
    <property type="chains" value="e=1-70"/>
</dbReference>
<dbReference type="PDB" id="7W3C">
    <property type="method" value="EM"/>
    <property type="resolution" value="3.40 A"/>
    <property type="chains" value="e=1-70"/>
</dbReference>
<dbReference type="PDB" id="7W3F">
    <property type="method" value="EM"/>
    <property type="resolution" value="3.30 A"/>
    <property type="chains" value="e=1-70"/>
</dbReference>
<dbReference type="PDB" id="7W3G">
    <property type="method" value="EM"/>
    <property type="resolution" value="3.20 A"/>
    <property type="chains" value="e=1-70"/>
</dbReference>
<dbReference type="PDB" id="7W3H">
    <property type="method" value="EM"/>
    <property type="resolution" value="3.20 A"/>
    <property type="chains" value="e=1-70"/>
</dbReference>
<dbReference type="PDB" id="7W3I">
    <property type="method" value="EM"/>
    <property type="resolution" value="3.50 A"/>
    <property type="chains" value="e=1-70"/>
</dbReference>
<dbReference type="PDB" id="7W3J">
    <property type="method" value="EM"/>
    <property type="resolution" value="3.50 A"/>
    <property type="chains" value="e=1-70"/>
</dbReference>
<dbReference type="PDB" id="7W3K">
    <property type="method" value="EM"/>
    <property type="resolution" value="3.60 A"/>
    <property type="chains" value="e=1-70"/>
</dbReference>
<dbReference type="PDB" id="7W3M">
    <property type="method" value="EM"/>
    <property type="resolution" value="3.50 A"/>
    <property type="chains" value="e=1-70"/>
</dbReference>
<dbReference type="PDB" id="8CVT">
    <property type="method" value="EM"/>
    <property type="resolution" value="3.00 A"/>
    <property type="chains" value="e=1-70"/>
</dbReference>
<dbReference type="PDB" id="8JRI">
    <property type="method" value="EM"/>
    <property type="resolution" value="3.40 A"/>
    <property type="chains" value="e=1-70"/>
</dbReference>
<dbReference type="PDB" id="8JRT">
    <property type="method" value="EM"/>
    <property type="resolution" value="3.60 A"/>
    <property type="chains" value="e=1-70"/>
</dbReference>
<dbReference type="PDB" id="8JTI">
    <property type="method" value="EM"/>
    <property type="resolution" value="3.80 A"/>
    <property type="chains" value="e=1-70"/>
</dbReference>
<dbReference type="PDB" id="8K0G">
    <property type="method" value="EM"/>
    <property type="resolution" value="3.80 A"/>
    <property type="chains" value="e=1-70"/>
</dbReference>
<dbReference type="PDB" id="8USB">
    <property type="method" value="EM"/>
    <property type="resolution" value="2.73 A"/>
    <property type="chains" value="e=1-70"/>
</dbReference>
<dbReference type="PDB" id="8USC">
    <property type="method" value="EM"/>
    <property type="resolution" value="3.10 A"/>
    <property type="chains" value="e=1-70"/>
</dbReference>
<dbReference type="PDB" id="8YJB">
    <property type="method" value="EM"/>
    <property type="resolution" value="4.10 A"/>
    <property type="chains" value="0=1-70"/>
</dbReference>
<dbReference type="PDB" id="9E8G">
    <property type="method" value="EM"/>
    <property type="resolution" value="3.01 A"/>
    <property type="chains" value="e=1-70"/>
</dbReference>
<dbReference type="PDB" id="9E8H">
    <property type="method" value="EM"/>
    <property type="resolution" value="2.90 A"/>
    <property type="chains" value="e=1-65"/>
</dbReference>
<dbReference type="PDB" id="9E8I">
    <property type="method" value="EM"/>
    <property type="resolution" value="2.87 A"/>
    <property type="chains" value="e=1-70"/>
</dbReference>
<dbReference type="PDB" id="9E8J">
    <property type="method" value="EM"/>
    <property type="resolution" value="3.47 A"/>
    <property type="chains" value="e=1-70"/>
</dbReference>
<dbReference type="PDB" id="9E8K">
    <property type="method" value="EM"/>
    <property type="resolution" value="4.08 A"/>
    <property type="chains" value="e=1-70"/>
</dbReference>
<dbReference type="PDB" id="9E8L">
    <property type="method" value="EM"/>
    <property type="resolution" value="3.59 A"/>
    <property type="chains" value="e=1-70"/>
</dbReference>
<dbReference type="PDB" id="9E8N">
    <property type="method" value="EM"/>
    <property type="resolution" value="3.62 A"/>
    <property type="chains" value="e=1-70"/>
</dbReference>
<dbReference type="PDB" id="9E8O">
    <property type="method" value="EM"/>
    <property type="resolution" value="3.10 A"/>
    <property type="chains" value="e=1-70"/>
</dbReference>
<dbReference type="PDB" id="9E8Q">
    <property type="method" value="EM"/>
    <property type="resolution" value="3.16 A"/>
    <property type="chains" value="e=1-70"/>
</dbReference>
<dbReference type="PDBsum" id="1IYJ"/>
<dbReference type="PDBsum" id="1MIU"/>
<dbReference type="PDBsum" id="1MJE"/>
<dbReference type="PDBsum" id="3T5X"/>
<dbReference type="PDBsum" id="5GJQ"/>
<dbReference type="PDBsum" id="5GJR"/>
<dbReference type="PDBsum" id="5L4K"/>
<dbReference type="PDBsum" id="5LN3"/>
<dbReference type="PDBsum" id="5M32"/>
<dbReference type="PDBsum" id="5T0C"/>
<dbReference type="PDBsum" id="5T0G"/>
<dbReference type="PDBsum" id="5T0H"/>
<dbReference type="PDBsum" id="5T0I"/>
<dbReference type="PDBsum" id="5T0J"/>
<dbReference type="PDBsum" id="5VFR"/>
<dbReference type="PDBsum" id="5VFT"/>
<dbReference type="PDBsum" id="5VGZ"/>
<dbReference type="PDBsum" id="5VHF"/>
<dbReference type="PDBsum" id="5VHH"/>
<dbReference type="PDBsum" id="5VHI"/>
<dbReference type="PDBsum" id="5VHS"/>
<dbReference type="PDBsum" id="6MSB"/>
<dbReference type="PDBsum" id="6MSD"/>
<dbReference type="PDBsum" id="6MSG"/>
<dbReference type="PDBsum" id="6MSH"/>
<dbReference type="PDBsum" id="6MSJ"/>
<dbReference type="PDBsum" id="6MSK"/>
<dbReference type="PDBsum" id="6WJD"/>
<dbReference type="PDBsum" id="6WJN"/>
<dbReference type="PDBsum" id="7QXN"/>
<dbReference type="PDBsum" id="7QXP"/>
<dbReference type="PDBsum" id="7QXU"/>
<dbReference type="PDBsum" id="7QXW"/>
<dbReference type="PDBsum" id="7QXX"/>
<dbReference type="PDBsum" id="7QY7"/>
<dbReference type="PDBsum" id="7QYA"/>
<dbReference type="PDBsum" id="7QYB"/>
<dbReference type="PDBsum" id="7W37"/>
<dbReference type="PDBsum" id="7W38"/>
<dbReference type="PDBsum" id="7W39"/>
<dbReference type="PDBsum" id="7W3A"/>
<dbReference type="PDBsum" id="7W3B"/>
<dbReference type="PDBsum" id="7W3C"/>
<dbReference type="PDBsum" id="7W3F"/>
<dbReference type="PDBsum" id="7W3G"/>
<dbReference type="PDBsum" id="7W3H"/>
<dbReference type="PDBsum" id="7W3I"/>
<dbReference type="PDBsum" id="7W3J"/>
<dbReference type="PDBsum" id="7W3K"/>
<dbReference type="PDBsum" id="7W3M"/>
<dbReference type="PDBsum" id="8CVT"/>
<dbReference type="PDBsum" id="8JRI"/>
<dbReference type="PDBsum" id="8JRT"/>
<dbReference type="PDBsum" id="8JTI"/>
<dbReference type="PDBsum" id="8K0G"/>
<dbReference type="PDBsum" id="8USB"/>
<dbReference type="PDBsum" id="8USC"/>
<dbReference type="PDBsum" id="8YJB"/>
<dbReference type="PDBsum" id="9E8G"/>
<dbReference type="PDBsum" id="9E8H"/>
<dbReference type="PDBsum" id="9E8I"/>
<dbReference type="PDBsum" id="9E8J"/>
<dbReference type="PDBsum" id="9E8K"/>
<dbReference type="PDBsum" id="9E8L"/>
<dbReference type="PDBsum" id="9E8N"/>
<dbReference type="PDBsum" id="9E8O"/>
<dbReference type="PDBsum" id="9E8Q"/>
<dbReference type="EMDB" id="EMD-14201"/>
<dbReference type="EMDB" id="EMD-14202"/>
<dbReference type="EMDB" id="EMD-14203"/>
<dbReference type="EMDB" id="EMD-14204"/>
<dbReference type="EMDB" id="EMD-14205"/>
<dbReference type="EMDB" id="EMD-14209"/>
<dbReference type="EMDB" id="EMD-14210"/>
<dbReference type="EMDB" id="EMD-14211"/>
<dbReference type="EMDB" id="EMD-21691"/>
<dbReference type="EMDB" id="EMD-21696"/>
<dbReference type="EMDB" id="EMD-27018"/>
<dbReference type="EMDB" id="EMD-32272"/>
<dbReference type="EMDB" id="EMD-32273"/>
<dbReference type="EMDB" id="EMD-32274"/>
<dbReference type="EMDB" id="EMD-32275"/>
<dbReference type="EMDB" id="EMD-32276"/>
<dbReference type="EMDB" id="EMD-32277"/>
<dbReference type="EMDB" id="EMD-32278"/>
<dbReference type="EMDB" id="EMD-32279"/>
<dbReference type="EMDB" id="EMD-32280"/>
<dbReference type="EMDB" id="EMD-32281"/>
<dbReference type="EMDB" id="EMD-32282"/>
<dbReference type="EMDB" id="EMD-32283"/>
<dbReference type="EMDB" id="EMD-32284"/>
<dbReference type="EMDB" id="EMD-36598"/>
<dbReference type="EMDB" id="EMD-36605"/>
<dbReference type="EMDB" id="EMD-36645"/>
<dbReference type="EMDB" id="EMD-36764"/>
<dbReference type="EMDB" id="EMD-39338"/>
<dbReference type="EMDB" id="EMD-4089"/>
<dbReference type="EMDB" id="EMD-4146"/>
<dbReference type="EMDB" id="EMD-42506"/>
<dbReference type="EMDB" id="EMD-42507"/>
<dbReference type="EMDB" id="EMD-47719"/>
<dbReference type="EMDB" id="EMD-47720"/>
<dbReference type="EMDB" id="EMD-47721"/>
<dbReference type="EMDB" id="EMD-47722"/>
<dbReference type="EMDB" id="EMD-47723"/>
<dbReference type="EMDB" id="EMD-47724"/>
<dbReference type="EMDB" id="EMD-47725"/>
<dbReference type="EMDB" id="EMD-47726"/>
<dbReference type="EMDB" id="EMD-47727"/>
<dbReference type="EMDB" id="EMD-8664"/>
<dbReference type="EMDB" id="EMD-8665"/>
<dbReference type="EMDB" id="EMD-8666"/>
<dbReference type="EMDB" id="EMD-8667"/>
<dbReference type="EMDB" id="EMD-8668"/>
<dbReference type="EMDB" id="EMD-8672"/>
<dbReference type="EMDB" id="EMD-8674"/>
<dbReference type="EMDB" id="EMD-8675"/>
<dbReference type="EMDB" id="EMD-8676"/>
<dbReference type="EMDB" id="EMD-8684"/>
<dbReference type="EMDB" id="EMD-9216"/>
<dbReference type="EMDB" id="EMD-9217"/>
<dbReference type="EMDB" id="EMD-9218"/>
<dbReference type="EMDB" id="EMD-9219"/>
<dbReference type="EMDB" id="EMD-9220"/>
<dbReference type="EMDB" id="EMD-9221"/>
<dbReference type="EMDB" id="EMD-9222"/>
<dbReference type="EMDB" id="EMD-9511"/>
<dbReference type="EMDB" id="EMD-9512"/>
<dbReference type="SMR" id="P60896"/>
<dbReference type="BioGRID" id="113692">
    <property type="interactions" value="143"/>
</dbReference>
<dbReference type="ComplexPortal" id="CPX-2477">
    <property type="entry name" value="TREX-2 transcription-export complex, CETN2 variant"/>
</dbReference>
<dbReference type="ComplexPortal" id="CPX-5993">
    <property type="entry name" value="26S proteasome complex"/>
</dbReference>
<dbReference type="ComplexPortal" id="CPX-7281">
    <property type="entry name" value="TREX-2 transcription-export complex, CETN3 variant"/>
</dbReference>
<dbReference type="ComplexPortal" id="CPX-8964">
    <property type="entry name" value="19S proteasome regulatory complex"/>
</dbReference>
<dbReference type="ComplexPortal" id="CPX-9082">
    <property type="entry name" value="19S-20S-PA28-alphabeta hybrid proteasome complex"/>
</dbReference>
<dbReference type="ComplexPortal" id="CPX-9085">
    <property type="entry name" value="19S-20S-PA28-gamma hybrid proteasome complex"/>
</dbReference>
<dbReference type="ComplexPortal" id="CPX-9086">
    <property type="entry name" value="30S proteasome complex"/>
</dbReference>
<dbReference type="CORUM" id="P60896"/>
<dbReference type="DIP" id="DIP-31023N"/>
<dbReference type="IntAct" id="P60896">
    <property type="interactions" value="127"/>
</dbReference>
<dbReference type="MINT" id="P60896"/>
<dbReference type="ChEMBL" id="CHEMBL2364701"/>
<dbReference type="iPTMnet" id="P60896"/>
<dbReference type="PhosphoSitePlus" id="P60896"/>
<dbReference type="BioMuta" id="SEM1"/>
<dbReference type="jPOST" id="P60896"/>
<dbReference type="MassIVE" id="P60896"/>
<dbReference type="PeptideAtlas" id="P60896"/>
<dbReference type="ProteomicsDB" id="57235"/>
<dbReference type="Antibodypedia" id="30181">
    <property type="antibodies" value="141 antibodies from 27 providers"/>
</dbReference>
<dbReference type="DNASU" id="7979"/>
<dbReference type="Ensembl" id="ENST00000248566.4">
    <molecule id="P60896-1"/>
    <property type="protein sequence ID" value="ENSP00000248566.2"/>
    <property type="gene ID" value="ENSG00000127922.10"/>
</dbReference>
<dbReference type="GeneID" id="7979"/>
<dbReference type="KEGG" id="hsa:7979"/>
<dbReference type="MANE-Select" id="ENST00000248566.4">
    <property type="protein sequence ID" value="ENSP00000248566.2"/>
    <property type="RefSeq nucleotide sequence ID" value="NM_006304.2"/>
    <property type="RefSeq protein sequence ID" value="NP_006295.1"/>
</dbReference>
<dbReference type="AGR" id="HGNC:10845"/>
<dbReference type="CTD" id="7979"/>
<dbReference type="DisGeNET" id="7979"/>
<dbReference type="GeneCards" id="SEM1"/>
<dbReference type="HGNC" id="HGNC:10845">
    <property type="gene designation" value="SEM1"/>
</dbReference>
<dbReference type="HPA" id="ENSG00000127922">
    <property type="expression patterns" value="Low tissue specificity"/>
</dbReference>
<dbReference type="MalaCards" id="SEM1"/>
<dbReference type="MIM" id="601285">
    <property type="type" value="gene"/>
</dbReference>
<dbReference type="neXtProt" id="NX_P60896"/>
<dbReference type="OpenTargets" id="ENSG00000127922"/>
<dbReference type="Orphanet" id="2440">
    <property type="disease" value="Isolated split hand-split foot malformation"/>
</dbReference>
<dbReference type="PharmGKB" id="PA35749"/>
<dbReference type="VEuPathDB" id="HostDB:ENSG00000127922"/>
<dbReference type="GeneTree" id="ENSGT00940000162732"/>
<dbReference type="OMA" id="TLWENNW"/>
<dbReference type="OrthoDB" id="9527655at2759"/>
<dbReference type="PhylomeDB" id="P60896"/>
<dbReference type="TreeFam" id="TF314699"/>
<dbReference type="PathwayCommons" id="P60896"/>
<dbReference type="Reactome" id="R-HSA-1169091">
    <property type="pathway name" value="Activation of NF-kappaB in B cells"/>
</dbReference>
<dbReference type="Reactome" id="R-HSA-1234176">
    <property type="pathway name" value="Oxygen-dependent proline hydroxylation of Hypoxia-inducible Factor Alpha"/>
</dbReference>
<dbReference type="Reactome" id="R-HSA-1236974">
    <property type="pathway name" value="ER-Phagosome pathway"/>
</dbReference>
<dbReference type="Reactome" id="R-HSA-1236978">
    <property type="pathway name" value="Cross-presentation of soluble exogenous antigens (endosomes)"/>
</dbReference>
<dbReference type="Reactome" id="R-HSA-174084">
    <property type="pathway name" value="Autodegradation of Cdh1 by Cdh1:APC/C"/>
</dbReference>
<dbReference type="Reactome" id="R-HSA-174113">
    <property type="pathway name" value="SCF-beta-TrCP mediated degradation of Emi1"/>
</dbReference>
<dbReference type="Reactome" id="R-HSA-174154">
    <property type="pathway name" value="APC/C:Cdc20 mediated degradation of Securin"/>
</dbReference>
<dbReference type="Reactome" id="R-HSA-174178">
    <property type="pathway name" value="APC/C:Cdh1 mediated degradation of Cdc20 and other APC/C:Cdh1 targeted proteins in late mitosis/early G1"/>
</dbReference>
<dbReference type="Reactome" id="R-HSA-174184">
    <property type="pathway name" value="Cdc20:Phospho-APC/C mediated degradation of Cyclin A"/>
</dbReference>
<dbReference type="Reactome" id="R-HSA-180534">
    <property type="pathway name" value="Vpu mediated degradation of CD4"/>
</dbReference>
<dbReference type="Reactome" id="R-HSA-180585">
    <property type="pathway name" value="Vif-mediated degradation of APOBEC3G"/>
</dbReference>
<dbReference type="Reactome" id="R-HSA-187577">
    <property type="pathway name" value="SCF(Skp2)-mediated degradation of p27/p21"/>
</dbReference>
<dbReference type="Reactome" id="R-HSA-195253">
    <property type="pathway name" value="Degradation of beta-catenin by the destruction complex"/>
</dbReference>
<dbReference type="Reactome" id="R-HSA-202424">
    <property type="pathway name" value="Downstream TCR signaling"/>
</dbReference>
<dbReference type="Reactome" id="R-HSA-211733">
    <property type="pathway name" value="Regulation of activated PAK-2p34 by proteasome mediated degradation"/>
</dbReference>
<dbReference type="Reactome" id="R-HSA-2467813">
    <property type="pathway name" value="Separation of Sister Chromatids"/>
</dbReference>
<dbReference type="Reactome" id="R-HSA-2871837">
    <property type="pathway name" value="FCERI mediated NF-kB activation"/>
</dbReference>
<dbReference type="Reactome" id="R-HSA-349425">
    <property type="pathway name" value="Autodegradation of the E3 ubiquitin ligase COP1"/>
</dbReference>
<dbReference type="Reactome" id="R-HSA-350562">
    <property type="pathway name" value="Regulation of ornithine decarboxylase (ODC)"/>
</dbReference>
<dbReference type="Reactome" id="R-HSA-382556">
    <property type="pathway name" value="ABC-family proteins mediated transport"/>
</dbReference>
<dbReference type="Reactome" id="R-HSA-450408">
    <property type="pathway name" value="AUF1 (hnRNP D0) binds and destabilizes mRNA"/>
</dbReference>
<dbReference type="Reactome" id="R-HSA-4608870">
    <property type="pathway name" value="Asymmetric localization of PCP proteins"/>
</dbReference>
<dbReference type="Reactome" id="R-HSA-4641257">
    <property type="pathway name" value="Degradation of AXIN"/>
</dbReference>
<dbReference type="Reactome" id="R-HSA-4641258">
    <property type="pathway name" value="Degradation of DVL"/>
</dbReference>
<dbReference type="Reactome" id="R-HSA-5358346">
    <property type="pathway name" value="Hedgehog ligand biogenesis"/>
</dbReference>
<dbReference type="Reactome" id="R-HSA-5362768">
    <property type="pathway name" value="Hh mutants are degraded by ERAD"/>
</dbReference>
<dbReference type="Reactome" id="R-HSA-5607761">
    <property type="pathway name" value="Dectin-1 mediated noncanonical NF-kB signaling"/>
</dbReference>
<dbReference type="Reactome" id="R-HSA-5607764">
    <property type="pathway name" value="CLEC7A (Dectin-1) signaling"/>
</dbReference>
<dbReference type="Reactome" id="R-HSA-5610780">
    <property type="pathway name" value="Degradation of GLI1 by the proteasome"/>
</dbReference>
<dbReference type="Reactome" id="R-HSA-5610783">
    <property type="pathway name" value="Degradation of GLI2 by the proteasome"/>
</dbReference>
<dbReference type="Reactome" id="R-HSA-5610785">
    <property type="pathway name" value="GLI3 is processed to GLI3R by the proteasome"/>
</dbReference>
<dbReference type="Reactome" id="R-HSA-5632684">
    <property type="pathway name" value="Hedgehog 'on' state"/>
</dbReference>
<dbReference type="Reactome" id="R-HSA-5658442">
    <property type="pathway name" value="Regulation of RAS by GAPs"/>
</dbReference>
<dbReference type="Reactome" id="R-HSA-5668541">
    <property type="pathway name" value="TNFR2 non-canonical NF-kB pathway"/>
</dbReference>
<dbReference type="Reactome" id="R-HSA-5676590">
    <property type="pathway name" value="NIK--&gt;noncanonical NF-kB signaling"/>
</dbReference>
<dbReference type="Reactome" id="R-HSA-5678895">
    <property type="pathway name" value="Defective CFTR causes cystic fibrosis"/>
</dbReference>
<dbReference type="Reactome" id="R-HSA-5685942">
    <property type="pathway name" value="HDR through Homologous Recombination (HRR)"/>
</dbReference>
<dbReference type="Reactome" id="R-HSA-5687128">
    <property type="pathway name" value="MAPK6/MAPK4 signaling"/>
</dbReference>
<dbReference type="Reactome" id="R-HSA-5689603">
    <property type="pathway name" value="UCH proteinases"/>
</dbReference>
<dbReference type="Reactome" id="R-HSA-5689880">
    <property type="pathway name" value="Ub-specific processing proteases"/>
</dbReference>
<dbReference type="Reactome" id="R-HSA-5693554">
    <property type="pathway name" value="Resolution of D-loop Structures through Synthesis-Dependent Strand Annealing (SDSA)"/>
</dbReference>
<dbReference type="Reactome" id="R-HSA-5693568">
    <property type="pathway name" value="Resolution of D-loop Structures through Holliday Junction Intermediates"/>
</dbReference>
<dbReference type="Reactome" id="R-HSA-5693579">
    <property type="pathway name" value="Homologous DNA Pairing and Strand Exchange"/>
</dbReference>
<dbReference type="Reactome" id="R-HSA-5693616">
    <property type="pathway name" value="Presynaptic phase of homologous DNA pairing and strand exchange"/>
</dbReference>
<dbReference type="Reactome" id="R-HSA-68867">
    <property type="pathway name" value="Assembly of the pre-replicative complex"/>
</dbReference>
<dbReference type="Reactome" id="R-HSA-68949">
    <property type="pathway name" value="Orc1 removal from chromatin"/>
</dbReference>
<dbReference type="Reactome" id="R-HSA-69017">
    <property type="pathway name" value="CDK-mediated phosphorylation and removal of Cdc6"/>
</dbReference>
<dbReference type="Reactome" id="R-HSA-69481">
    <property type="pathway name" value="G2/M Checkpoints"/>
</dbReference>
<dbReference type="Reactome" id="R-HSA-69601">
    <property type="pathway name" value="Ubiquitin Mediated Degradation of Phosphorylated Cdc25A"/>
</dbReference>
<dbReference type="Reactome" id="R-HSA-75815">
    <property type="pathway name" value="Ubiquitin-dependent degradation of Cyclin D"/>
</dbReference>
<dbReference type="Reactome" id="R-HSA-8852276">
    <property type="pathway name" value="The role of GTSE1 in G2/M progression after G2 checkpoint"/>
</dbReference>
<dbReference type="Reactome" id="R-HSA-8854050">
    <property type="pathway name" value="FBXL7 down-regulates AURKA during mitotic entry and in early mitosis"/>
</dbReference>
<dbReference type="Reactome" id="R-HSA-8939236">
    <property type="pathway name" value="RUNX1 regulates transcription of genes involved in differentiation of HSCs"/>
</dbReference>
<dbReference type="Reactome" id="R-HSA-8939902">
    <property type="pathway name" value="Regulation of RUNX2 expression and activity"/>
</dbReference>
<dbReference type="Reactome" id="R-HSA-8941858">
    <property type="pathway name" value="Regulation of RUNX3 expression and activity"/>
</dbReference>
<dbReference type="Reactome" id="R-HSA-8948751">
    <property type="pathway name" value="Regulation of PTEN stability and activity"/>
</dbReference>
<dbReference type="Reactome" id="R-HSA-8951664">
    <property type="pathway name" value="Neddylation"/>
</dbReference>
<dbReference type="Reactome" id="R-HSA-9010553">
    <property type="pathway name" value="Regulation of expression of SLITs and ROBOs"/>
</dbReference>
<dbReference type="Reactome" id="R-HSA-9020702">
    <property type="pathway name" value="Interleukin-1 signaling"/>
</dbReference>
<dbReference type="Reactome" id="R-HSA-9604323">
    <property type="pathway name" value="Negative regulation of NOTCH4 signaling"/>
</dbReference>
<dbReference type="Reactome" id="R-HSA-9701192">
    <property type="pathway name" value="Defective homologous recombination repair (HRR) due to BRCA1 loss of function"/>
</dbReference>
<dbReference type="Reactome" id="R-HSA-9704331">
    <property type="pathway name" value="Defective HDR through Homologous Recombination Repair (HRR) due to PALB2 loss of BRCA1 binding function"/>
</dbReference>
<dbReference type="Reactome" id="R-HSA-9704646">
    <property type="pathway name" value="Defective HDR through Homologous Recombination Repair (HRR) due to PALB2 loss of BRCA2/RAD51/RAD51C binding function"/>
</dbReference>
<dbReference type="Reactome" id="R-HSA-9709275">
    <property type="pathway name" value="Impaired BRCA2 translocation to the nucleus"/>
</dbReference>
<dbReference type="Reactome" id="R-HSA-9709570">
    <property type="pathway name" value="Impaired BRCA2 binding to RAD51"/>
</dbReference>
<dbReference type="Reactome" id="R-HSA-9755511">
    <property type="pathway name" value="KEAP1-NFE2L2 pathway"/>
</dbReference>
<dbReference type="Reactome" id="R-HSA-9762114">
    <property type="pathway name" value="GSK3B and BTRC:CUL1-mediated-degradation of NFE2L2"/>
</dbReference>
<dbReference type="Reactome" id="R-HSA-9763198">
    <property type="pathway name" value="Impaired BRCA2 binding to SEM1 (DSS1)"/>
</dbReference>
<dbReference type="Reactome" id="R-HSA-9824272">
    <property type="pathway name" value="Somitogenesis"/>
</dbReference>
<dbReference type="Reactome" id="R-HSA-983168">
    <property type="pathway name" value="Antigen processing: Ubiquitination &amp; Proteasome degradation"/>
</dbReference>
<dbReference type="Reactome" id="R-HSA-9907900">
    <property type="pathway name" value="Proteasome assembly"/>
</dbReference>
<dbReference type="SignaLink" id="P60896"/>
<dbReference type="SIGNOR" id="P60896"/>
<dbReference type="BioGRID-ORCS" id="7979">
    <property type="hits" value="692 hits in 1156 CRISPR screens"/>
</dbReference>
<dbReference type="ChiTaRS" id="SHFM1">
    <property type="organism name" value="human"/>
</dbReference>
<dbReference type="EvolutionaryTrace" id="P60896"/>
<dbReference type="GeneWiki" id="SHFM1"/>
<dbReference type="GenomeRNAi" id="7979"/>
<dbReference type="Pharos" id="P60896">
    <property type="development level" value="Tbio"/>
</dbReference>
<dbReference type="PRO" id="PR:P60896"/>
<dbReference type="Proteomes" id="UP000005640">
    <property type="component" value="Chromosome 7"/>
</dbReference>
<dbReference type="Bgee" id="ENSG00000127922">
    <property type="expression patterns" value="Expressed in calcaneal tendon and 204 other cell types or tissues"/>
</dbReference>
<dbReference type="ExpressionAtlas" id="P60896">
    <property type="expression patterns" value="baseline and differential"/>
</dbReference>
<dbReference type="GO" id="GO:0005829">
    <property type="term" value="C:cytosol"/>
    <property type="evidence" value="ECO:0000304"/>
    <property type="project" value="Reactome"/>
</dbReference>
<dbReference type="GO" id="GO:0032039">
    <property type="term" value="C:integrator complex"/>
    <property type="evidence" value="ECO:0000314"/>
    <property type="project" value="HGNC-UCL"/>
</dbReference>
<dbReference type="GO" id="GO:0005654">
    <property type="term" value="C:nucleoplasm"/>
    <property type="evidence" value="ECO:0000304"/>
    <property type="project" value="Reactome"/>
</dbReference>
<dbReference type="GO" id="GO:0000502">
    <property type="term" value="C:proteasome complex"/>
    <property type="evidence" value="ECO:0000314"/>
    <property type="project" value="UniProtKB"/>
</dbReference>
<dbReference type="GO" id="GO:0008541">
    <property type="term" value="C:proteasome regulatory particle, lid subcomplex"/>
    <property type="evidence" value="ECO:0007669"/>
    <property type="project" value="InterPro"/>
</dbReference>
<dbReference type="GO" id="GO:0032991">
    <property type="term" value="C:protein-containing complex"/>
    <property type="evidence" value="ECO:0000314"/>
    <property type="project" value="UniProtKB"/>
</dbReference>
<dbReference type="GO" id="GO:0000724">
    <property type="term" value="P:double-strand break repair via homologous recombination"/>
    <property type="evidence" value="ECO:0007669"/>
    <property type="project" value="Ensembl"/>
</dbReference>
<dbReference type="GO" id="GO:0006406">
    <property type="term" value="P:mRNA export from nucleus"/>
    <property type="evidence" value="ECO:0007669"/>
    <property type="project" value="InterPro"/>
</dbReference>
<dbReference type="GO" id="GO:0043248">
    <property type="term" value="P:proteasome assembly"/>
    <property type="evidence" value="ECO:0007669"/>
    <property type="project" value="InterPro"/>
</dbReference>
<dbReference type="GO" id="GO:0043161">
    <property type="term" value="P:proteasome-mediated ubiquitin-dependent protein catabolic process"/>
    <property type="evidence" value="ECO:0000303"/>
    <property type="project" value="ComplexPortal"/>
</dbReference>
<dbReference type="CDD" id="cd13768">
    <property type="entry name" value="DSS1_Sem1"/>
    <property type="match status" value="1"/>
</dbReference>
<dbReference type="DisProt" id="DP00617"/>
<dbReference type="InterPro" id="IPR007834">
    <property type="entry name" value="DSS1_SEM1"/>
</dbReference>
<dbReference type="PANTHER" id="PTHR16771">
    <property type="entry name" value="26 PROTEASOME COMPLEX SUBUNIT DSS1"/>
    <property type="match status" value="1"/>
</dbReference>
<dbReference type="PANTHER" id="PTHR16771:SF0">
    <property type="entry name" value="26S PROTEASOME COMPLEX SUBUNIT SEM1"/>
    <property type="match status" value="1"/>
</dbReference>
<dbReference type="Pfam" id="PF05160">
    <property type="entry name" value="DSS1_SEM1"/>
    <property type="match status" value="1"/>
</dbReference>
<dbReference type="SMART" id="SM01385">
    <property type="entry name" value="DSS1_SEM1"/>
    <property type="match status" value="1"/>
</dbReference>
<accession>P60896</accession>
<accession>Q13437</accession>
<accession>Q61067</accession>
<sequence>MSEKKQPVDLGLLEEDDEFEEFPAEDWAGLDEDEDAHVWEDNWDDDNVEDDFSNQLRAELEKHGYKMETS</sequence>
<gene>
    <name evidence="12" type="primary">SEM1</name>
    <name type="synonym">C7orf76</name>
    <name type="synonym">DSS1</name>
    <name type="synonym">SHFDG1</name>
    <name type="synonym">SHFM1</name>
</gene>
<comment type="function">
    <text evidence="3 4 6 7">Component of the 26S proteasome, a multiprotein complex involved in the ATP-dependent degradation of ubiquitinated proteins. This complex plays a key role in the maintenance of protein homeostasis by removing misfolded or damaged proteins, which could impair cellular functions, and by removing proteins whose functions are no longer required. Therefore, the proteasome participates in numerous cellular processes, including cell cycle progression, apoptosis, or DNA damage repair (PubMed:15117943). Component of the TREX-2 complex (transcription and export complex 2), composed of at least ENY2, GANP, PCID2, SEM1, and either centrin CETN2 or CETN3 (PubMed:22307388). The TREX-2 complex functions in docking export-competent ribonucleoprotein particles (mRNPs) to the nuclear entrance of the nuclear pore complex (nuclear basket). TREX-2 participates in mRNA export and accurate chromatin positioning in the nucleus by tethering genes to the nuclear periphery. Binds and stabilizes BRCA2 and is thus involved in the control of R-loop-associated DNA damage and thus transcription-associated genomic instability. R-loop accumulation increases in SEM1-depleted cells.</text>
</comment>
<comment type="subunit">
    <text evidence="1 2 5 6 8 9 10">Component of the 19S proteasome regulatory particle complex. The 26S proteasome consists of a 20S core particle (CP) and two 19S regulatory subunits (RP). The regulatory particle is made of a lid composed of 9 subunits including SEM1, a base containing 6 ATPases and few additional components (PubMed:27342858, PubMed:27428775). Belongs to the TREX-2 complex (transcription and export complex 2), composed of at least ENY2, GANP, PCID2, SEM1, and either centrin CETN2 or CETN3 (PubMed:22307388). Component of the homologous recombination repair (HR) complex composed of ERCC5/XPG, BRCA2, PALB2, DSS1 and RAD51 (PubMed:26833090). Interacts with the C-terminal of BRCA2 (PubMed:10373512, PubMed:21719596).</text>
</comment>
<comment type="interaction">
    <interactant intactId="EBI-79819">
        <id>P60896</id>
    </interactant>
    <interactant intactId="EBI-79792">
        <id>P51587</id>
        <label>BRCA2</label>
    </interactant>
    <organismsDiffer>false</organismsDiffer>
    <experiments>10</experiments>
</comment>
<comment type="interaction">
    <interactant intactId="EBI-79819">
        <id>P60896</id>
    </interactant>
    <interactant intactId="EBI-750300">
        <id>Q01658</id>
        <label>DR1</label>
    </interactant>
    <organismsDiffer>false</organismsDiffer>
    <experiments>3</experiments>
</comment>
<comment type="interaction">
    <interactant intactId="EBI-79819">
        <id>P60896</id>
    </interactant>
    <interactant intactId="EBI-400434">
        <id>P35637</id>
        <label>FUS</label>
    </interactant>
    <organismsDiffer>false</organismsDiffer>
    <experiments>3</experiments>
</comment>
<comment type="interaction">
    <interactant intactId="EBI-79819">
        <id>P60896</id>
    </interactant>
    <interactant intactId="EBI-747754">
        <id>P28799</id>
        <label>GRN</label>
    </interactant>
    <organismsDiffer>false</organismsDiffer>
    <experiments>3</experiments>
</comment>
<comment type="interaction">
    <interactant intactId="EBI-79819">
        <id>P60896</id>
    </interactant>
    <interactant intactId="EBI-389564">
        <id>Q00403</id>
        <label>GTF2B</label>
    </interactant>
    <organismsDiffer>false</organismsDiffer>
    <experiments>3</experiments>
</comment>
<comment type="interaction">
    <interactant intactId="EBI-79819">
        <id>P60896</id>
    </interactant>
    <interactant intactId="EBI-1054873">
        <id>Q9Y5Q9</id>
        <label>GTF3C3</label>
    </interactant>
    <organismsDiffer>false</organismsDiffer>
    <experiments>3</experiments>
</comment>
<comment type="interaction">
    <interactant intactId="EBI-79819">
        <id>P60896</id>
    </interactant>
    <interactant intactId="EBI-1055254">
        <id>Q8WXH2</id>
        <label>JPH3</label>
    </interactant>
    <organismsDiffer>false</organismsDiffer>
    <experiments>3</experiments>
</comment>
<comment type="interaction">
    <interactant intactId="EBI-79819">
        <id>P60896</id>
    </interactant>
    <interactant intactId="EBI-5323863">
        <id>Q5S007</id>
        <label>LRRK2</label>
    </interactant>
    <organismsDiffer>false</organismsDiffer>
    <experiments>3</experiments>
</comment>
<comment type="interaction">
    <interactant intactId="EBI-79819">
        <id>P60896</id>
    </interactant>
    <interactant intactId="EBI-1014514">
        <id>P35240-4</id>
        <label>NF2</label>
    </interactant>
    <organismsDiffer>false</organismsDiffer>
    <experiments>3</experiments>
</comment>
<comment type="interaction">
    <interactant intactId="EBI-79819">
        <id>P60896</id>
    </interactant>
    <interactant intactId="EBI-1051701">
        <id>Q5JVF3</id>
        <label>PCID2</label>
    </interactant>
    <organismsDiffer>false</organismsDiffer>
    <experiments>4</experiments>
</comment>
<comment type="interaction">
    <interactant intactId="EBI-79819">
        <id>P60896</id>
    </interactant>
    <interactant intactId="EBI-15970419">
        <id>Q5JVF3-1</id>
        <label>PCID2</label>
    </interactant>
    <organismsDiffer>false</organismsDiffer>
    <experiments>3</experiments>
</comment>
<comment type="interaction">
    <interactant intactId="EBI-79819">
        <id>P60896</id>
    </interactant>
    <interactant intactId="EBI-357622">
        <id>O43242</id>
        <label>PSMD3</label>
    </interactant>
    <organismsDiffer>false</organismsDiffer>
    <experiments>4</experiments>
</comment>
<comment type="interaction">
    <interactant intactId="EBI-79819">
        <id>P60896</id>
    </interactant>
    <interactant intactId="EBI-990792">
        <id>P00441</id>
        <label>SOD1</label>
    </interactant>
    <organismsDiffer>false</organismsDiffer>
    <experiments>3</experiments>
</comment>
<comment type="interaction">
    <interactant intactId="EBI-79819">
        <id>P60896</id>
    </interactant>
    <interactant intactId="EBI-25912847">
        <id>Q6NUL7</id>
        <label>SPTLC1</label>
    </interactant>
    <organismsDiffer>false</organismsDiffer>
    <experiments>3</experiments>
</comment>
<comment type="subcellular location">
    <subcellularLocation>
        <location evidence="8">Nucleus</location>
    </subcellularLocation>
</comment>
<comment type="alternative products">
    <event type="alternative promoter"/>
    <isoform>
        <id>P60896-1</id>
        <name>1</name>
        <sequence type="displayed"/>
    </isoform>
    <isoform>
        <id>Q6ZVN7-1</id>
        <name>2</name>
        <sequence type="external"/>
    </isoform>
</comment>
<comment type="tissue specificity">
    <text>Expressed in limb bud, craniofacial primordia and skin.</text>
</comment>
<comment type="similarity">
    <text evidence="11">Belongs to the DSS1/SEM1 family.</text>
</comment>
<organism>
    <name type="scientific">Homo sapiens</name>
    <name type="common">Human</name>
    <dbReference type="NCBI Taxonomy" id="9606"/>
    <lineage>
        <taxon>Eukaryota</taxon>
        <taxon>Metazoa</taxon>
        <taxon>Chordata</taxon>
        <taxon>Craniata</taxon>
        <taxon>Vertebrata</taxon>
        <taxon>Euteleostomi</taxon>
        <taxon>Mammalia</taxon>
        <taxon>Eutheria</taxon>
        <taxon>Euarchontoglires</taxon>
        <taxon>Primates</taxon>
        <taxon>Haplorrhini</taxon>
        <taxon>Catarrhini</taxon>
        <taxon>Hominidae</taxon>
        <taxon>Homo</taxon>
    </lineage>
</organism>
<keyword id="KW-0002">3D-structure</keyword>
<keyword id="KW-0877">Alternative promoter usage</keyword>
<keyword id="KW-0539">Nucleus</keyword>
<keyword id="KW-0647">Proteasome</keyword>
<keyword id="KW-1267">Proteomics identification</keyword>
<keyword id="KW-1185">Reference proteome</keyword>
<reference key="1">
    <citation type="journal article" date="1996" name="Hum. Mol. Genet.">
        <title>Characterization of the split hand/split foot malformation locus SHFM1 at 7q21.3-q22.1 and analysis of a candidate gene for its expression during limb development.</title>
        <authorList>
            <person name="Crackower M.A."/>
            <person name="Scherer S.W."/>
            <person name="Rommens J.M."/>
            <person name="Hui C.-C."/>
            <person name="Poorkaj P."/>
            <person name="Soder S."/>
            <person name="Cobben J.M."/>
            <person name="Hudgins L."/>
            <person name="Evans J.P."/>
            <person name="Tsui L.-C."/>
        </authorList>
    </citation>
    <scope>NUCLEOTIDE SEQUENCE [MRNA]</scope>
</reference>
<reference key="2">
    <citation type="journal article" date="2003" name="Nature">
        <title>The DNA sequence of human chromosome 7.</title>
        <authorList>
            <person name="Hillier L.W."/>
            <person name="Fulton R.S."/>
            <person name="Fulton L.A."/>
            <person name="Graves T.A."/>
            <person name="Pepin K.H."/>
            <person name="Wagner-McPherson C."/>
            <person name="Layman D."/>
            <person name="Maas J."/>
            <person name="Jaeger S."/>
            <person name="Walker R."/>
            <person name="Wylie K."/>
            <person name="Sekhon M."/>
            <person name="Becker M.C."/>
            <person name="O'Laughlin M.D."/>
            <person name="Schaller M.E."/>
            <person name="Fewell G.A."/>
            <person name="Delehaunty K.D."/>
            <person name="Miner T.L."/>
            <person name="Nash W.E."/>
            <person name="Cordes M."/>
            <person name="Du H."/>
            <person name="Sun H."/>
            <person name="Edwards J."/>
            <person name="Bradshaw-Cordum H."/>
            <person name="Ali J."/>
            <person name="Andrews S."/>
            <person name="Isak A."/>
            <person name="Vanbrunt A."/>
            <person name="Nguyen C."/>
            <person name="Du F."/>
            <person name="Lamar B."/>
            <person name="Courtney L."/>
            <person name="Kalicki J."/>
            <person name="Ozersky P."/>
            <person name="Bielicki L."/>
            <person name="Scott K."/>
            <person name="Holmes A."/>
            <person name="Harkins R."/>
            <person name="Harris A."/>
            <person name="Strong C.M."/>
            <person name="Hou S."/>
            <person name="Tomlinson C."/>
            <person name="Dauphin-Kohlberg S."/>
            <person name="Kozlowicz-Reilly A."/>
            <person name="Leonard S."/>
            <person name="Rohlfing T."/>
            <person name="Rock S.M."/>
            <person name="Tin-Wollam A.-M."/>
            <person name="Abbott A."/>
            <person name="Minx P."/>
            <person name="Maupin R."/>
            <person name="Strowmatt C."/>
            <person name="Latreille P."/>
            <person name="Miller N."/>
            <person name="Johnson D."/>
            <person name="Murray J."/>
            <person name="Woessner J.P."/>
            <person name="Wendl M.C."/>
            <person name="Yang S.-P."/>
            <person name="Schultz B.R."/>
            <person name="Wallis J.W."/>
            <person name="Spieth J."/>
            <person name="Bieri T.A."/>
            <person name="Nelson J.O."/>
            <person name="Berkowicz N."/>
            <person name="Wohldmann P.E."/>
            <person name="Cook L.L."/>
            <person name="Hickenbotham M.T."/>
            <person name="Eldred J."/>
            <person name="Williams D."/>
            <person name="Bedell J.A."/>
            <person name="Mardis E.R."/>
            <person name="Clifton S.W."/>
            <person name="Chissoe S.L."/>
            <person name="Marra M.A."/>
            <person name="Raymond C."/>
            <person name="Haugen E."/>
            <person name="Gillett W."/>
            <person name="Zhou Y."/>
            <person name="James R."/>
            <person name="Phelps K."/>
            <person name="Iadanoto S."/>
            <person name="Bubb K."/>
            <person name="Simms E."/>
            <person name="Levy R."/>
            <person name="Clendenning J."/>
            <person name="Kaul R."/>
            <person name="Kent W.J."/>
            <person name="Furey T.S."/>
            <person name="Baertsch R.A."/>
            <person name="Brent M.R."/>
            <person name="Keibler E."/>
            <person name="Flicek P."/>
            <person name="Bork P."/>
            <person name="Suyama M."/>
            <person name="Bailey J.A."/>
            <person name="Portnoy M.E."/>
            <person name="Torrents D."/>
            <person name="Chinwalla A.T."/>
            <person name="Gish W.R."/>
            <person name="Eddy S.R."/>
            <person name="McPherson J.D."/>
            <person name="Olson M.V."/>
            <person name="Eichler E.E."/>
            <person name="Green E.D."/>
            <person name="Waterston R.H."/>
            <person name="Wilson R.K."/>
        </authorList>
    </citation>
    <scope>NUCLEOTIDE SEQUENCE [LARGE SCALE GENOMIC DNA]</scope>
</reference>
<reference key="3">
    <citation type="journal article" date="2004" name="Genome Res.">
        <title>The status, quality, and expansion of the NIH full-length cDNA project: the Mammalian Gene Collection (MGC).</title>
        <authorList>
            <consortium name="The MGC Project Team"/>
        </authorList>
    </citation>
    <scope>NUCLEOTIDE SEQUENCE [LARGE SCALE MRNA]</scope>
    <source>
        <tissue>Brain</tissue>
    </source>
</reference>
<reference key="4">
    <citation type="journal article" date="1992" name="Eur. J. Biochem.">
        <title>Demonstration that a human 26S proteolytic complex consists of a proteasome and multiple associated protein components and hydrolyzes ATP and ubiquitin-ligated proteins by closely linked mechanisms.</title>
        <authorList>
            <person name="Kanayama H.O."/>
            <person name="Tamura T."/>
            <person name="Ugai S."/>
            <person name="Kagawa S."/>
            <person name="Tanahashi N."/>
            <person name="Yoshimura T."/>
            <person name="Tanaka K."/>
            <person name="Ichihara A."/>
        </authorList>
    </citation>
    <scope>FUNCTION</scope>
</reference>
<reference key="5">
    <citation type="journal article" date="1999" name="Mol. Cell. Biol.">
        <title>Interaction between the product of the breast cancer susceptibility gene BRCA2 and DSS1, a protein functionally conserved from yeast to mammals.</title>
        <authorList>
            <person name="Marston N.J."/>
            <person name="Richards W.J."/>
            <person name="Hughes D."/>
            <person name="Bertwistle D."/>
            <person name="Marshall C.J."/>
            <person name="Ashworth A."/>
        </authorList>
    </citation>
    <scope>INTERACTION WITH BRCA2</scope>
</reference>
<reference key="6">
    <citation type="journal article" date="2004" name="J. Biol. Chem.">
        <title>Sem1p is a novel subunit of the 26S proteasome from Saccharomyces cerevisiae.</title>
        <authorList>
            <person name="Sone T."/>
            <person name="Saeki Y."/>
            <person name="Toh-e A."/>
            <person name="Yokosawa H."/>
        </authorList>
    </citation>
    <scope>FUNCTION</scope>
</reference>
<reference key="7">
    <citation type="journal article" date="2007" name="Biochemistry">
        <title>Mass spectrometric characterization of the affinity-purified human 26S proteasome complex.</title>
        <authorList>
            <person name="Wang X."/>
            <person name="Chen C.-F."/>
            <person name="Baker P.R."/>
            <person name="Chen P.-L."/>
            <person name="Kaiser P."/>
            <person name="Huang L."/>
        </authorList>
    </citation>
    <scope>IDENTIFICATION BY MASS SPECTROMETRY [LARGE SCALE ANALYSIS]</scope>
    <source>
        <tissue>Embryonic kidney</tissue>
    </source>
</reference>
<reference key="8">
    <citation type="journal article" date="2011" name="Blood">
        <title>A comprehensive functional characterization of BRCA2 variants associated with Fanconi anemia using mouse ES cell-based assay.</title>
        <authorList>
            <person name="Biswas K."/>
            <person name="Das R."/>
            <person name="Alter B.P."/>
            <person name="Kuznetsov S.G."/>
            <person name="Stauffer S."/>
            <person name="North S.L."/>
            <person name="Burkett S."/>
            <person name="Brody L.C."/>
            <person name="Meyer S."/>
            <person name="Byrd R.A."/>
            <person name="Sharan S.K."/>
        </authorList>
    </citation>
    <scope>INTERACTION WITH BRCA2</scope>
</reference>
<reference key="9">
    <citation type="journal article" date="2012" name="Nucleic Acids Res.">
        <title>Functional and structural characterization of the mammalian TREX-2 complex that links transcription with nuclear messenger RNA export.</title>
        <authorList>
            <person name="Jani D."/>
            <person name="Lutz S."/>
            <person name="Hurt E."/>
            <person name="Laskey R.A."/>
            <person name="Stewart M."/>
            <person name="Wickramasinghe V.O."/>
        </authorList>
    </citation>
    <scope>INTERACTION WITH TREX-2 COMPLEX</scope>
</reference>
<reference key="10">
    <citation type="journal article" date="2014" name="J. Proteomics">
        <title>An enzyme assisted RP-RPLC approach for in-depth analysis of human liver phosphoproteome.</title>
        <authorList>
            <person name="Bian Y."/>
            <person name="Song C."/>
            <person name="Cheng K."/>
            <person name="Dong M."/>
            <person name="Wang F."/>
            <person name="Huang J."/>
            <person name="Sun D."/>
            <person name="Wang L."/>
            <person name="Ye M."/>
            <person name="Zou H."/>
        </authorList>
    </citation>
    <scope>IDENTIFICATION BY MASS SPECTROMETRY [LARGE SCALE ANALYSIS]</scope>
    <source>
        <tissue>Liver</tissue>
    </source>
</reference>
<reference key="11">
    <citation type="journal article" date="2014" name="Nature">
        <title>BRCA2 prevents R-loop accumulation and associates with TREX-2 mRNA export factor PCID2.</title>
        <authorList>
            <person name="Bhatia V."/>
            <person name="Barroso S.I."/>
            <person name="Garcia-Rubio M.L."/>
            <person name="Tumini E."/>
            <person name="Herrera-Moyano E."/>
            <person name="Aguilera A."/>
        </authorList>
    </citation>
    <scope>FUNCTION</scope>
</reference>
<reference key="12">
    <citation type="journal article" date="2016" name="Mol. Cell">
        <title>Non-catalytic Roles for XPG with BRCA1 and BRCA2 in Homologous Recombination and Genome Stability.</title>
        <authorList>
            <person name="Trego K.S."/>
            <person name="Groesser T."/>
            <person name="Davalos A.R."/>
            <person name="Parplys A.C."/>
            <person name="Zhao W."/>
            <person name="Nelson M.R."/>
            <person name="Hlaing A."/>
            <person name="Shih B."/>
            <person name="Rydberg B."/>
            <person name="Pluth J.M."/>
            <person name="Tsai M.S."/>
            <person name="Hoeijmakers J.H.J."/>
            <person name="Sung P."/>
            <person name="Wiese C."/>
            <person name="Campisi J."/>
            <person name="Cooper P.K."/>
        </authorList>
    </citation>
    <scope>IDENTIFICATION IN THE HR COMPLEX</scope>
    <scope>SUBCELLULAR LOCATION</scope>
</reference>
<reference key="13">
    <citation type="journal article" date="2002" name="Science">
        <title>BRCA2 function in DNA binding and recombination from a BRCA2-DSS1-ssDNA structure.</title>
        <authorList>
            <person name="Yang H."/>
            <person name="Jeffrey P.D."/>
            <person name="Miller J."/>
            <person name="Kinnucan E."/>
            <person name="Sun Y."/>
            <person name="Thoma N.H."/>
            <person name="Zheng N."/>
            <person name="Chen P.L."/>
            <person name="Lee W.H."/>
            <person name="Pavletich N.P."/>
        </authorList>
    </citation>
    <scope>X-RAY CRYSTALLOGRAPHY (3.4 ANGSTROMS) IN COMPLEX WITH BRCA2</scope>
</reference>
<reference key="14">
    <citation type="journal article" date="2016" name="Nat. Struct. Mol. Biol.">
        <title>An atomic structure of the human 26S proteasome.</title>
        <authorList>
            <person name="Huang X."/>
            <person name="Luan B."/>
            <person name="Wu J."/>
            <person name="Shi Y."/>
        </authorList>
    </citation>
    <scope>STRUCTURE BY ELECTRON MICROSCOPY (3.50 ANGSTROMS) OF 1-389</scope>
    <scope>SUBUNIT</scope>
</reference>
<reference key="15">
    <citation type="journal article" date="2016" name="Proc. Natl. Acad. Sci. U.S.A.">
        <title>Structure of the human 26S proteasome at a resolution of 3.9 Aa.</title>
        <authorList>
            <person name="Schweitzer A."/>
            <person name="Aufderheide A."/>
            <person name="Rudack T."/>
            <person name="Beck F."/>
            <person name="Pfeifer G."/>
            <person name="Plitzko J.M."/>
            <person name="Sakata E."/>
            <person name="Schulten K."/>
            <person name="Foerster F."/>
            <person name="Baumeister W."/>
        </authorList>
    </citation>
    <scope>STRUCTURE BY ELECTRON MICROSCOPY (4.50 ANGSTROMS) OF 1-389</scope>
    <scope>SUBUNIT</scope>
</reference>
<evidence type="ECO:0000269" key="1">
    <source>
    </source>
</evidence>
<evidence type="ECO:0000269" key="2">
    <source>
    </source>
</evidence>
<evidence type="ECO:0000269" key="3">
    <source>
    </source>
</evidence>
<evidence type="ECO:0000269" key="4">
    <source>
    </source>
</evidence>
<evidence type="ECO:0000269" key="5">
    <source>
    </source>
</evidence>
<evidence type="ECO:0000269" key="6">
    <source>
    </source>
</evidence>
<evidence type="ECO:0000269" key="7">
    <source>
    </source>
</evidence>
<evidence type="ECO:0000269" key="8">
    <source>
    </source>
</evidence>
<evidence type="ECO:0000269" key="9">
    <source>
    </source>
</evidence>
<evidence type="ECO:0000269" key="10">
    <source>
    </source>
</evidence>
<evidence type="ECO:0000305" key="11"/>
<evidence type="ECO:0000312" key="12">
    <source>
        <dbReference type="HGNC" id="HGNC:10845"/>
    </source>
</evidence>
<evidence type="ECO:0007829" key="13">
    <source>
        <dbReference type="PDB" id="1MIU"/>
    </source>
</evidence>
<evidence type="ECO:0007829" key="14">
    <source>
        <dbReference type="PDB" id="1MJE"/>
    </source>
</evidence>
<evidence type="ECO:0007829" key="15">
    <source>
        <dbReference type="PDB" id="3T5X"/>
    </source>
</evidence>
<name>SEM1_HUMAN</name>
<protein>
    <recommendedName>
        <fullName>26S proteasome complex subunit SEM1</fullName>
    </recommendedName>
    <alternativeName>
        <fullName>26S proteasome complex subunit DSS1</fullName>
    </alternativeName>
    <alternativeName>
        <fullName>Deleted in split hand/split foot protein 1</fullName>
    </alternativeName>
    <alternativeName>
        <fullName>Split hand/foot deleted protein 1</fullName>
    </alternativeName>
    <alternativeName>
        <fullName>Split hand/foot malformation type 1 protein</fullName>
    </alternativeName>
</protein>
<feature type="chain" id="PRO_0000122961" description="26S proteasome complex subunit SEM1">
    <location>
        <begin position="1"/>
        <end position="70"/>
    </location>
</feature>
<feature type="sequence variant" id="VAR_012003" description="In dbSNP:rs1802882.">
    <original>D</original>
    <variation>G</variation>
    <location>
        <position position="17"/>
    </location>
</feature>
<feature type="helix" evidence="13">
    <location>
        <begin position="10"/>
        <end position="12"/>
    </location>
</feature>
<feature type="strand" evidence="14">
    <location>
        <begin position="21"/>
        <end position="23"/>
    </location>
</feature>
<feature type="helix" evidence="15">
    <location>
        <begin position="42"/>
        <end position="44"/>
    </location>
</feature>
<feature type="helix" evidence="15">
    <location>
        <begin position="51"/>
        <end position="62"/>
    </location>
</feature>